<keyword id="KW-0067">ATP-binding</keyword>
<keyword id="KW-0963">Cytoplasm</keyword>
<keyword id="KW-0479">Metal-binding</keyword>
<keyword id="KW-0501">Molybdenum cofactor biosynthesis</keyword>
<keyword id="KW-0511">Multifunctional enzyme</keyword>
<keyword id="KW-0547">Nucleotide-binding</keyword>
<keyword id="KW-0548">Nucleotidyltransferase</keyword>
<keyword id="KW-1185">Reference proteome</keyword>
<keyword id="KW-0808">Transferase</keyword>
<keyword id="KW-0819">tRNA processing</keyword>
<keyword id="KW-0833">Ubl conjugation pathway</keyword>
<keyword id="KW-0862">Zinc</keyword>
<reference key="1">
    <citation type="journal article" date="2005" name="Nature">
        <title>The genome of the social amoeba Dictyostelium discoideum.</title>
        <authorList>
            <person name="Eichinger L."/>
            <person name="Pachebat J.A."/>
            <person name="Gloeckner G."/>
            <person name="Rajandream M.A."/>
            <person name="Sucgang R."/>
            <person name="Berriman M."/>
            <person name="Song J."/>
            <person name="Olsen R."/>
            <person name="Szafranski K."/>
            <person name="Xu Q."/>
            <person name="Tunggal B."/>
            <person name="Kummerfeld S."/>
            <person name="Madera M."/>
            <person name="Konfortov B.A."/>
            <person name="Rivero F."/>
            <person name="Bankier A.T."/>
            <person name="Lehmann R."/>
            <person name="Hamlin N."/>
            <person name="Davies R."/>
            <person name="Gaudet P."/>
            <person name="Fey P."/>
            <person name="Pilcher K."/>
            <person name="Chen G."/>
            <person name="Saunders D."/>
            <person name="Sodergren E.J."/>
            <person name="Davis P."/>
            <person name="Kerhornou A."/>
            <person name="Nie X."/>
            <person name="Hall N."/>
            <person name="Anjard C."/>
            <person name="Hemphill L."/>
            <person name="Bason N."/>
            <person name="Farbrother P."/>
            <person name="Desany B."/>
            <person name="Just E."/>
            <person name="Morio T."/>
            <person name="Rost R."/>
            <person name="Churcher C.M."/>
            <person name="Cooper J."/>
            <person name="Haydock S."/>
            <person name="van Driessche N."/>
            <person name="Cronin A."/>
            <person name="Goodhead I."/>
            <person name="Muzny D.M."/>
            <person name="Mourier T."/>
            <person name="Pain A."/>
            <person name="Lu M."/>
            <person name="Harper D."/>
            <person name="Lindsay R."/>
            <person name="Hauser H."/>
            <person name="James K.D."/>
            <person name="Quiles M."/>
            <person name="Madan Babu M."/>
            <person name="Saito T."/>
            <person name="Buchrieser C."/>
            <person name="Wardroper A."/>
            <person name="Felder M."/>
            <person name="Thangavelu M."/>
            <person name="Johnson D."/>
            <person name="Knights A."/>
            <person name="Loulseged H."/>
            <person name="Mungall K.L."/>
            <person name="Oliver K."/>
            <person name="Price C."/>
            <person name="Quail M.A."/>
            <person name="Urushihara H."/>
            <person name="Hernandez J."/>
            <person name="Rabbinowitsch E."/>
            <person name="Steffen D."/>
            <person name="Sanders M."/>
            <person name="Ma J."/>
            <person name="Kohara Y."/>
            <person name="Sharp S."/>
            <person name="Simmonds M.N."/>
            <person name="Spiegler S."/>
            <person name="Tivey A."/>
            <person name="Sugano S."/>
            <person name="White B."/>
            <person name="Walker D."/>
            <person name="Woodward J.R."/>
            <person name="Winckler T."/>
            <person name="Tanaka Y."/>
            <person name="Shaulsky G."/>
            <person name="Schleicher M."/>
            <person name="Weinstock G.M."/>
            <person name="Rosenthal A."/>
            <person name="Cox E.C."/>
            <person name="Chisholm R.L."/>
            <person name="Gibbs R.A."/>
            <person name="Loomis W.F."/>
            <person name="Platzer M."/>
            <person name="Kay R.R."/>
            <person name="Williams J.G."/>
            <person name="Dear P.H."/>
            <person name="Noegel A.A."/>
            <person name="Barrell B.G."/>
            <person name="Kuspa A."/>
        </authorList>
    </citation>
    <scope>NUCLEOTIDE SEQUENCE [LARGE SCALE GENOMIC DNA]</scope>
    <source>
        <strain>AX4</strain>
    </source>
</reference>
<organism>
    <name type="scientific">Dictyostelium discoideum</name>
    <name type="common">Social amoeba</name>
    <dbReference type="NCBI Taxonomy" id="44689"/>
    <lineage>
        <taxon>Eukaryota</taxon>
        <taxon>Amoebozoa</taxon>
        <taxon>Evosea</taxon>
        <taxon>Eumycetozoa</taxon>
        <taxon>Dictyostelia</taxon>
        <taxon>Dictyosteliales</taxon>
        <taxon>Dictyosteliaceae</taxon>
        <taxon>Dictyostelium</taxon>
    </lineage>
</organism>
<proteinExistence type="inferred from homology"/>
<sequence>MEKYIKEHTLKPNEIERYGRQLITPDIGVSGQMSLCNSSVLIIGAGGLGCPVALYLSSAGIGTLGLVDYDTVEISNLHRQIGHRESSKGISKAVSLSKTISELNSLIKVNTYETTFTSETAMEIIKNYDIVVDASDNVATRYLVNDACVLTGKPLVSGSALKWEGQITCYNYNNGPCYRCIFPTPPPVETVTKCSDGGVLGPIVGVIGSLQALEVIKILTNNKEGVLSGRLLIYDGMSAVFRTVRIRGKQSGCNVCGDKPTVTQLIDYTQFCQSNYSESAGKVDDRVDKTLIITVEQFNQSIKNNNNNHLLIDVRPKIQFDICSLPNSNNIPIEEIDKKESIEIIEKLIKEKVENNNNNNNNNENRDASDELSVYLVCRRGNKSQDAVKILDEKLKEFRDKFKLLHIKDGLLGWNESIDDSFPIY</sequence>
<name>UBA4_DICDI</name>
<gene>
    <name type="primary">mocs3</name>
    <name type="synonym">uba4</name>
    <name type="ORF">DDB_G0267980</name>
</gene>
<evidence type="ECO:0000250" key="1"/>
<evidence type="ECO:0000250" key="2">
    <source>
        <dbReference type="UniProtKB" id="P38820"/>
    </source>
</evidence>
<evidence type="ECO:0000255" key="3">
    <source>
        <dbReference type="HAMAP-Rule" id="MF_03049"/>
    </source>
</evidence>
<dbReference type="EC" id="2.7.7.80" evidence="3"/>
<dbReference type="EC" id="2.8.1.11" evidence="3"/>
<dbReference type="EMBL" id="AAFI02000003">
    <property type="protein sequence ID" value="EAL73443.1"/>
    <property type="molecule type" value="Genomic_DNA"/>
</dbReference>
<dbReference type="RefSeq" id="XP_647463.1">
    <property type="nucleotide sequence ID" value="XM_642371.1"/>
</dbReference>
<dbReference type="SMR" id="Q55FS0"/>
<dbReference type="FunCoup" id="Q55FS0">
    <property type="interactions" value="351"/>
</dbReference>
<dbReference type="STRING" id="44689.Q55FS0"/>
<dbReference type="GlyGen" id="Q55FS0">
    <property type="glycosylation" value="1 site"/>
</dbReference>
<dbReference type="PaxDb" id="44689-DDB0267172"/>
<dbReference type="EnsemblProtists" id="EAL73443">
    <property type="protein sequence ID" value="EAL73443"/>
    <property type="gene ID" value="DDB_G0267980"/>
</dbReference>
<dbReference type="GeneID" id="8616270"/>
<dbReference type="KEGG" id="ddi:DDB_G0267980"/>
<dbReference type="dictyBase" id="DDB_G0267980">
    <property type="gene designation" value="mocs3"/>
</dbReference>
<dbReference type="VEuPathDB" id="AmoebaDB:DDB_G0267980"/>
<dbReference type="eggNOG" id="KOG2017">
    <property type="taxonomic scope" value="Eukaryota"/>
</dbReference>
<dbReference type="HOGENOM" id="CLU_013325_1_2_1"/>
<dbReference type="InParanoid" id="Q55FS0"/>
<dbReference type="OMA" id="IPDVGMD"/>
<dbReference type="PhylomeDB" id="Q55FS0"/>
<dbReference type="Reactome" id="R-DDI-947581">
    <property type="pathway name" value="Molybdenum cofactor biosynthesis"/>
</dbReference>
<dbReference type="UniPathway" id="UPA00344"/>
<dbReference type="UniPathway" id="UPA00988"/>
<dbReference type="PRO" id="PR:Q55FS0"/>
<dbReference type="Proteomes" id="UP000002195">
    <property type="component" value="Chromosome 1"/>
</dbReference>
<dbReference type="GO" id="GO:0005737">
    <property type="term" value="C:cytoplasm"/>
    <property type="evidence" value="ECO:0000318"/>
    <property type="project" value="GO_Central"/>
</dbReference>
<dbReference type="GO" id="GO:0005829">
    <property type="term" value="C:cytosol"/>
    <property type="evidence" value="ECO:0000250"/>
    <property type="project" value="UniProtKB"/>
</dbReference>
<dbReference type="GO" id="GO:0005524">
    <property type="term" value="F:ATP binding"/>
    <property type="evidence" value="ECO:0007669"/>
    <property type="project" value="UniProtKB-KW"/>
</dbReference>
<dbReference type="GO" id="GO:0046872">
    <property type="term" value="F:metal ion binding"/>
    <property type="evidence" value="ECO:0007669"/>
    <property type="project" value="UniProtKB-KW"/>
</dbReference>
<dbReference type="GO" id="GO:0061605">
    <property type="term" value="F:molybdopterin-synthase adenylyltransferase activity"/>
    <property type="evidence" value="ECO:0007669"/>
    <property type="project" value="UniProtKB-EC"/>
</dbReference>
<dbReference type="GO" id="GO:0061604">
    <property type="term" value="F:molybdopterin-synthase sulfurtransferase activity"/>
    <property type="evidence" value="ECO:0000250"/>
    <property type="project" value="UniProtKB"/>
</dbReference>
<dbReference type="GO" id="GO:0016779">
    <property type="term" value="F:nucleotidyltransferase activity"/>
    <property type="evidence" value="ECO:0000318"/>
    <property type="project" value="GO_Central"/>
</dbReference>
<dbReference type="GO" id="GO:0004792">
    <property type="term" value="F:thiosulfate-cyanide sulfurtransferase activity"/>
    <property type="evidence" value="ECO:0000318"/>
    <property type="project" value="GO_Central"/>
</dbReference>
<dbReference type="GO" id="GO:0042292">
    <property type="term" value="F:URM1 activating enzyme activity"/>
    <property type="evidence" value="ECO:0000318"/>
    <property type="project" value="GO_Central"/>
</dbReference>
<dbReference type="GO" id="GO:0006777">
    <property type="term" value="P:Mo-molybdopterin cofactor biosynthetic process"/>
    <property type="evidence" value="ECO:0000250"/>
    <property type="project" value="UniProtKB"/>
</dbReference>
<dbReference type="GO" id="GO:0002143">
    <property type="term" value="P:tRNA wobble position uridine thiolation"/>
    <property type="evidence" value="ECO:0007669"/>
    <property type="project" value="InterPro"/>
</dbReference>
<dbReference type="CDD" id="cd00757">
    <property type="entry name" value="ThiF_MoeB_HesA_family"/>
    <property type="match status" value="1"/>
</dbReference>
<dbReference type="FunFam" id="3.40.50.720:FF:000206">
    <property type="entry name" value="Adenylyltransferase and sulfurtransferase MOCS3"/>
    <property type="match status" value="1"/>
</dbReference>
<dbReference type="FunFam" id="3.40.250.10:FF:000150">
    <property type="entry name" value="Adenylyltransferase and sulfurtransferase MOCS3 homolog"/>
    <property type="match status" value="1"/>
</dbReference>
<dbReference type="Gene3D" id="3.40.50.720">
    <property type="entry name" value="NAD(P)-binding Rossmann-like Domain"/>
    <property type="match status" value="1"/>
</dbReference>
<dbReference type="Gene3D" id="3.40.250.10">
    <property type="entry name" value="Rhodanese-like domain"/>
    <property type="match status" value="1"/>
</dbReference>
<dbReference type="HAMAP" id="MF_03049">
    <property type="entry name" value="MOCS3_Uba4"/>
    <property type="match status" value="1"/>
</dbReference>
<dbReference type="InterPro" id="IPR028885">
    <property type="entry name" value="MOCS3/Uba4"/>
</dbReference>
<dbReference type="InterPro" id="IPR001763">
    <property type="entry name" value="Rhodanese-like_dom"/>
</dbReference>
<dbReference type="InterPro" id="IPR036873">
    <property type="entry name" value="Rhodanese-like_dom_sf"/>
</dbReference>
<dbReference type="InterPro" id="IPR045886">
    <property type="entry name" value="ThiF/MoeB/HesA"/>
</dbReference>
<dbReference type="InterPro" id="IPR000594">
    <property type="entry name" value="ThiF_NAD_FAD-bd"/>
</dbReference>
<dbReference type="InterPro" id="IPR035985">
    <property type="entry name" value="Ubiquitin-activating_enz"/>
</dbReference>
<dbReference type="NCBIfam" id="NF004281">
    <property type="entry name" value="PRK05690.1"/>
    <property type="match status" value="1"/>
</dbReference>
<dbReference type="PANTHER" id="PTHR10953:SF102">
    <property type="entry name" value="ADENYLYLTRANSFERASE AND SULFURTRANSFERASE MOCS3"/>
    <property type="match status" value="1"/>
</dbReference>
<dbReference type="PANTHER" id="PTHR10953">
    <property type="entry name" value="UBIQUITIN-ACTIVATING ENZYME E1"/>
    <property type="match status" value="1"/>
</dbReference>
<dbReference type="Pfam" id="PF00581">
    <property type="entry name" value="Rhodanese"/>
    <property type="match status" value="1"/>
</dbReference>
<dbReference type="Pfam" id="PF00899">
    <property type="entry name" value="ThiF"/>
    <property type="match status" value="1"/>
</dbReference>
<dbReference type="PRINTS" id="PR00420">
    <property type="entry name" value="RNGMNOXGNASE"/>
</dbReference>
<dbReference type="SMART" id="SM00450">
    <property type="entry name" value="RHOD"/>
    <property type="match status" value="1"/>
</dbReference>
<dbReference type="SUPFAM" id="SSF69572">
    <property type="entry name" value="Activating enzymes of the ubiquitin-like proteins"/>
    <property type="match status" value="1"/>
</dbReference>
<dbReference type="PROSITE" id="PS50206">
    <property type="entry name" value="RHODANESE_3"/>
    <property type="match status" value="1"/>
</dbReference>
<protein>
    <recommendedName>
        <fullName evidence="3">Adenylyltransferase and sulfurtransferase MOCS3</fullName>
    </recommendedName>
    <alternativeName>
        <fullName evidence="3">Molybdenum cofactor synthesis protein 3</fullName>
    </alternativeName>
    <alternativeName>
        <fullName evidence="3">Ubiquitin-like protein activator 4 homolog</fullName>
    </alternativeName>
    <domain>
        <recommendedName>
            <fullName evidence="3">Molybdopterin-synthase adenylyltransferase</fullName>
            <ecNumber evidence="3">2.7.7.80</ecNumber>
        </recommendedName>
        <alternativeName>
            <fullName evidence="3">Adenylyltransferase MOCS3</fullName>
        </alternativeName>
        <alternativeName>
            <fullName evidence="3">Sulfur carrier protein MOCS2A adenylyltransferase</fullName>
        </alternativeName>
    </domain>
    <domain>
        <recommendedName>
            <fullName evidence="3">Molybdopterin-synthase sulfurtransferase</fullName>
            <ecNumber evidence="3">2.8.1.11</ecNumber>
        </recommendedName>
        <alternativeName>
            <fullName evidence="3">Sulfur carrier protein MOCS2A sulfurtransferase</fullName>
        </alternativeName>
        <alternativeName>
            <fullName evidence="3">Sulfurtransferase MOCS3</fullName>
        </alternativeName>
    </domain>
</protein>
<comment type="function">
    <text evidence="1">Plays a central role in 2-thiolation of mcm(5)S(2)U at tRNA wobble positions of cytosolic tRNA(Lys), tRNA(Glu) and tRNA(Gln). Also essential during biosynthesis of the molybdenum cofactor. Acts by mediating the C-terminal thiocarboxylation of sulfur carriers urm1 and mocs2a. Its N-terminus first activates urm1 and mocs2a as acyl-adenylates (-COAMP), then the persulfide sulfur on the catalytic cysteine is transferred to urm1 and mocs2a to form thiocarboxylation (-COSH) of their C-terminus. The reaction probably involves hydrogen sulfide that is generated from the persulfide intermediate and that acts as a nucleophile towards urm1 and mocs2a. Subsequently, a transient disulfide bond is formed. Does not use thiosulfate as sulfur donor; nfs1 probably acting as a sulfur donor for thiocarboxylation reactions (By similarity).</text>
</comment>
<comment type="catalytic activity">
    <reaction evidence="3">
        <text>[molybdopterin-synthase sulfur-carrier protein]-C-terminal Gly-Gly + ATP + H(+) = [molybdopterin-synthase sulfur-carrier protein]-C-terminal Gly-Gly-AMP + diphosphate</text>
        <dbReference type="Rhea" id="RHEA:43616"/>
        <dbReference type="Rhea" id="RHEA-COMP:12159"/>
        <dbReference type="Rhea" id="RHEA-COMP:12202"/>
        <dbReference type="ChEBI" id="CHEBI:15378"/>
        <dbReference type="ChEBI" id="CHEBI:30616"/>
        <dbReference type="ChEBI" id="CHEBI:33019"/>
        <dbReference type="ChEBI" id="CHEBI:90618"/>
        <dbReference type="ChEBI" id="CHEBI:90778"/>
        <dbReference type="EC" id="2.7.7.80"/>
    </reaction>
</comment>
<comment type="catalytic activity">
    <reaction evidence="3">
        <text>[molybdopterin-synthase sulfur-carrier protein]-C-terminal Gly-Gly-AMP + S-sulfanyl-L-cysteinyl-[cysteine desulfurase] + AH2 = [molybdopterin-synthase sulfur-carrier protein]-C-terminal-Gly-aminoethanethioate + L-cysteinyl-[cysteine desulfurase] + A + AMP + 2 H(+)</text>
        <dbReference type="Rhea" id="RHEA:48612"/>
        <dbReference type="Rhea" id="RHEA-COMP:12157"/>
        <dbReference type="Rhea" id="RHEA-COMP:12158"/>
        <dbReference type="Rhea" id="RHEA-COMP:12159"/>
        <dbReference type="Rhea" id="RHEA-COMP:19907"/>
        <dbReference type="ChEBI" id="CHEBI:13193"/>
        <dbReference type="ChEBI" id="CHEBI:15378"/>
        <dbReference type="ChEBI" id="CHEBI:17499"/>
        <dbReference type="ChEBI" id="CHEBI:29950"/>
        <dbReference type="ChEBI" id="CHEBI:61963"/>
        <dbReference type="ChEBI" id="CHEBI:90618"/>
        <dbReference type="ChEBI" id="CHEBI:232372"/>
        <dbReference type="ChEBI" id="CHEBI:456215"/>
        <dbReference type="EC" id="2.8.1.11"/>
    </reaction>
</comment>
<comment type="cofactor">
    <cofactor evidence="3">
        <name>Zn(2+)</name>
        <dbReference type="ChEBI" id="CHEBI:29105"/>
    </cofactor>
    <text evidence="3">Binds 1 zinc ion per subunit.</text>
</comment>
<comment type="pathway">
    <text evidence="3">tRNA modification; 5-methoxycarbonylmethyl-2-thiouridine-tRNA biosynthesis.</text>
</comment>
<comment type="pathway">
    <text evidence="3">Cofactor biosynthesis; molybdopterin biosynthesis.</text>
</comment>
<comment type="subcellular location">
    <subcellularLocation>
        <location evidence="2">Cytoplasm</location>
        <location evidence="2">Cytosol</location>
    </subcellularLocation>
</comment>
<comment type="similarity">
    <text evidence="3">In the N-terminal section; belongs to the HesA/MoeB/ThiF family. UBA4 subfamily.</text>
</comment>
<accession>Q55FS0</accession>
<feature type="chain" id="PRO_0000331263" description="Adenylyltransferase and sulfurtransferase MOCS3">
    <location>
        <begin position="1"/>
        <end position="425"/>
    </location>
</feature>
<feature type="domain" description="Rhodanese" evidence="3">
    <location>
        <begin position="305"/>
        <end position="423"/>
    </location>
</feature>
<feature type="active site" description="Glycyl thioester intermediate; for adenylyltransferase activity" evidence="3">
    <location>
        <position position="194"/>
    </location>
</feature>
<feature type="active site" description="Cysteine persulfide intermediate; for sulfurtransferase activity" evidence="3">
    <location>
        <position position="378"/>
    </location>
</feature>
<feature type="binding site" evidence="3">
    <location>
        <position position="47"/>
    </location>
    <ligand>
        <name>ATP</name>
        <dbReference type="ChEBI" id="CHEBI:30616"/>
    </ligand>
</feature>
<feature type="binding site" evidence="3">
    <location>
        <position position="68"/>
    </location>
    <ligand>
        <name>ATP</name>
        <dbReference type="ChEBI" id="CHEBI:30616"/>
    </ligand>
</feature>
<feature type="binding site" evidence="3">
    <location>
        <begin position="75"/>
        <end position="79"/>
    </location>
    <ligand>
        <name>ATP</name>
        <dbReference type="ChEBI" id="CHEBI:30616"/>
    </ligand>
</feature>
<feature type="binding site" evidence="3">
    <location>
        <position position="92"/>
    </location>
    <ligand>
        <name>ATP</name>
        <dbReference type="ChEBI" id="CHEBI:30616"/>
    </ligand>
</feature>
<feature type="binding site" evidence="3">
    <location>
        <begin position="136"/>
        <end position="137"/>
    </location>
    <ligand>
        <name>ATP</name>
        <dbReference type="ChEBI" id="CHEBI:30616"/>
    </ligand>
</feature>
<feature type="binding site" evidence="3">
    <location>
        <position position="177"/>
    </location>
    <ligand>
        <name>Zn(2+)</name>
        <dbReference type="ChEBI" id="CHEBI:29105"/>
    </ligand>
</feature>
<feature type="binding site" evidence="3">
    <location>
        <position position="180"/>
    </location>
    <ligand>
        <name>Zn(2+)</name>
        <dbReference type="ChEBI" id="CHEBI:29105"/>
    </ligand>
</feature>
<feature type="binding site" evidence="3">
    <location>
        <position position="253"/>
    </location>
    <ligand>
        <name>Zn(2+)</name>
        <dbReference type="ChEBI" id="CHEBI:29105"/>
    </ligand>
</feature>
<feature type="binding site" evidence="3">
    <location>
        <position position="256"/>
    </location>
    <ligand>
        <name>Zn(2+)</name>
        <dbReference type="ChEBI" id="CHEBI:29105"/>
    </ligand>
</feature>